<comment type="function">
    <text evidence="1">May play a role in DNA repair. It seems to be involved in an RecBC-independent recombinational process of DNA repair. It may act with RecF and RecO.</text>
</comment>
<comment type="similarity">
    <text evidence="1">Belongs to the RecR family.</text>
</comment>
<name>RECR_RHIWR</name>
<reference key="1">
    <citation type="journal article" date="2010" name="J. Bacteriol.">
        <title>Genome sequence of the dioxin-mineralizing bacterium Sphingomonas wittichii RW1.</title>
        <authorList>
            <person name="Miller T.R."/>
            <person name="Delcher A.L."/>
            <person name="Salzberg S.L."/>
            <person name="Saunders E."/>
            <person name="Detter J.C."/>
            <person name="Halden R.U."/>
        </authorList>
    </citation>
    <scope>NUCLEOTIDE SEQUENCE [LARGE SCALE GENOMIC DNA]</scope>
    <source>
        <strain>DSM 6014 / CCUG 31198 / JCM 15750 / NBRC 105917 / EY 4224 / RW1</strain>
    </source>
</reference>
<gene>
    <name evidence="1" type="primary">recR</name>
    <name type="ordered locus">Swit_4043</name>
</gene>
<evidence type="ECO:0000255" key="1">
    <source>
        <dbReference type="HAMAP-Rule" id="MF_00017"/>
    </source>
</evidence>
<dbReference type="EMBL" id="CP000699">
    <property type="protein sequence ID" value="ABQ70387.1"/>
    <property type="molecule type" value="Genomic_DNA"/>
</dbReference>
<dbReference type="SMR" id="A5VDM1"/>
<dbReference type="STRING" id="392499.Swit_4043"/>
<dbReference type="PaxDb" id="392499-Swit_4043"/>
<dbReference type="KEGG" id="swi:Swit_4043"/>
<dbReference type="eggNOG" id="COG0353">
    <property type="taxonomic scope" value="Bacteria"/>
</dbReference>
<dbReference type="HOGENOM" id="CLU_060739_1_1_5"/>
<dbReference type="OrthoDB" id="9802672at2"/>
<dbReference type="Proteomes" id="UP000001989">
    <property type="component" value="Chromosome"/>
</dbReference>
<dbReference type="GO" id="GO:0003677">
    <property type="term" value="F:DNA binding"/>
    <property type="evidence" value="ECO:0007669"/>
    <property type="project" value="UniProtKB-UniRule"/>
</dbReference>
<dbReference type="GO" id="GO:0008270">
    <property type="term" value="F:zinc ion binding"/>
    <property type="evidence" value="ECO:0007669"/>
    <property type="project" value="UniProtKB-KW"/>
</dbReference>
<dbReference type="GO" id="GO:0006310">
    <property type="term" value="P:DNA recombination"/>
    <property type="evidence" value="ECO:0007669"/>
    <property type="project" value="UniProtKB-UniRule"/>
</dbReference>
<dbReference type="GO" id="GO:0006281">
    <property type="term" value="P:DNA repair"/>
    <property type="evidence" value="ECO:0007669"/>
    <property type="project" value="UniProtKB-UniRule"/>
</dbReference>
<dbReference type="CDD" id="cd01025">
    <property type="entry name" value="TOPRIM_recR"/>
    <property type="match status" value="1"/>
</dbReference>
<dbReference type="Gene3D" id="3.40.1360.10">
    <property type="match status" value="1"/>
</dbReference>
<dbReference type="Gene3D" id="6.10.250.240">
    <property type="match status" value="1"/>
</dbReference>
<dbReference type="Gene3D" id="1.10.8.420">
    <property type="entry name" value="RecR Domain 1"/>
    <property type="match status" value="1"/>
</dbReference>
<dbReference type="HAMAP" id="MF_00017">
    <property type="entry name" value="RecR"/>
    <property type="match status" value="1"/>
</dbReference>
<dbReference type="InterPro" id="IPR000093">
    <property type="entry name" value="DNA_Rcmb_RecR"/>
</dbReference>
<dbReference type="InterPro" id="IPR023627">
    <property type="entry name" value="Rcmb_RecR"/>
</dbReference>
<dbReference type="InterPro" id="IPR015967">
    <property type="entry name" value="Rcmb_RecR_Znf"/>
</dbReference>
<dbReference type="InterPro" id="IPR006171">
    <property type="entry name" value="TOPRIM_dom"/>
</dbReference>
<dbReference type="InterPro" id="IPR034137">
    <property type="entry name" value="TOPRIM_RecR"/>
</dbReference>
<dbReference type="NCBIfam" id="TIGR00615">
    <property type="entry name" value="recR"/>
    <property type="match status" value="1"/>
</dbReference>
<dbReference type="PANTHER" id="PTHR30446">
    <property type="entry name" value="RECOMBINATION PROTEIN RECR"/>
    <property type="match status" value="1"/>
</dbReference>
<dbReference type="PANTHER" id="PTHR30446:SF0">
    <property type="entry name" value="RECOMBINATION PROTEIN RECR"/>
    <property type="match status" value="1"/>
</dbReference>
<dbReference type="Pfam" id="PF21175">
    <property type="entry name" value="RecR_C"/>
    <property type="match status" value="1"/>
</dbReference>
<dbReference type="Pfam" id="PF21176">
    <property type="entry name" value="RecR_HhH"/>
    <property type="match status" value="1"/>
</dbReference>
<dbReference type="Pfam" id="PF02132">
    <property type="entry name" value="RecR_ZnF"/>
    <property type="match status" value="1"/>
</dbReference>
<dbReference type="Pfam" id="PF13662">
    <property type="entry name" value="Toprim_4"/>
    <property type="match status" value="1"/>
</dbReference>
<dbReference type="SUPFAM" id="SSF111304">
    <property type="entry name" value="Recombination protein RecR"/>
    <property type="match status" value="1"/>
</dbReference>
<dbReference type="PROSITE" id="PS01300">
    <property type="entry name" value="RECR"/>
    <property type="match status" value="1"/>
</dbReference>
<dbReference type="PROSITE" id="PS50880">
    <property type="entry name" value="TOPRIM"/>
    <property type="match status" value="1"/>
</dbReference>
<organism>
    <name type="scientific">Rhizorhabdus wittichii (strain DSM 6014 / CCUG 31198 / JCM 15750 / NBRC 105917 / EY 4224 / RW1)</name>
    <name type="common">Sphingomonas wittichii</name>
    <dbReference type="NCBI Taxonomy" id="392499"/>
    <lineage>
        <taxon>Bacteria</taxon>
        <taxon>Pseudomonadati</taxon>
        <taxon>Pseudomonadota</taxon>
        <taxon>Alphaproteobacteria</taxon>
        <taxon>Sphingomonadales</taxon>
        <taxon>Sphingomonadaceae</taxon>
        <taxon>Rhizorhabdus</taxon>
    </lineage>
</organism>
<proteinExistence type="inferred from homology"/>
<sequence>MSSPEIETLTQALAKLPGLGPRSARRAVLHLLKKREAALGPLLRALEAVNDKLTSCHVCGNVDTGDPCGICADPRRDARMLCVVEEVADLWALDRSRLFPGRFHVLGGRLSALEGIRPEDLSIDLLIGRIAAGGIDEVVLAMNATLEGQTTAHYIADRLESFPVRLTQLAHGLPVGGELDYLDEGTLAQALRARRPVS</sequence>
<feature type="chain" id="PRO_1000001617" description="Recombination protein RecR">
    <location>
        <begin position="1"/>
        <end position="198"/>
    </location>
</feature>
<feature type="domain" description="Toprim" evidence="1">
    <location>
        <begin position="79"/>
        <end position="174"/>
    </location>
</feature>
<feature type="zinc finger region" description="C4-type" evidence="1">
    <location>
        <begin position="56"/>
        <end position="71"/>
    </location>
</feature>
<keyword id="KW-0227">DNA damage</keyword>
<keyword id="KW-0233">DNA recombination</keyword>
<keyword id="KW-0234">DNA repair</keyword>
<keyword id="KW-0479">Metal-binding</keyword>
<keyword id="KW-1185">Reference proteome</keyword>
<keyword id="KW-0862">Zinc</keyword>
<keyword id="KW-0863">Zinc-finger</keyword>
<protein>
    <recommendedName>
        <fullName evidence="1">Recombination protein RecR</fullName>
    </recommendedName>
</protein>
<accession>A5VDM1</accession>